<sequence length="131" mass="14535">MSITYTTVGELKVGSYVVIDGEPCRVVEVTKAKTGKHGSAKANVVAIGVFSGAKKTLMAPVDQQVEVPIIEKHIGQIIADMGDKIQVMDLETYETFEIEKPTEDELASKIRPNAELEYWEIMGRRKIVRVK</sequence>
<reference key="1">
    <citation type="journal article" date="2009" name="Proc. Natl. Acad. Sci. U.S.A.">
        <title>Biogeography of the Sulfolobus islandicus pan-genome.</title>
        <authorList>
            <person name="Reno M.L."/>
            <person name="Held N.L."/>
            <person name="Fields C.J."/>
            <person name="Burke P.V."/>
            <person name="Whitaker R.J."/>
        </authorList>
    </citation>
    <scope>NUCLEOTIDE SEQUENCE [LARGE SCALE GENOMIC DNA]</scope>
    <source>
        <strain>Y.N.15.51 / Yellowstone #2</strain>
    </source>
</reference>
<name>IF5A_SACI1</name>
<accession>C3NHT8</accession>
<dbReference type="EMBL" id="CP001404">
    <property type="protein sequence ID" value="ACP48698.1"/>
    <property type="molecule type" value="Genomic_DNA"/>
</dbReference>
<dbReference type="RefSeq" id="WP_012711261.1">
    <property type="nucleotide sequence ID" value="NC_012623.1"/>
</dbReference>
<dbReference type="SMR" id="C3NHT8"/>
<dbReference type="KEGG" id="sin:YN1551_1610"/>
<dbReference type="HOGENOM" id="CLU_102600_3_0_2"/>
<dbReference type="Proteomes" id="UP000006818">
    <property type="component" value="Chromosome"/>
</dbReference>
<dbReference type="GO" id="GO:0005737">
    <property type="term" value="C:cytoplasm"/>
    <property type="evidence" value="ECO:0007669"/>
    <property type="project" value="UniProtKB-SubCell"/>
</dbReference>
<dbReference type="GO" id="GO:0043022">
    <property type="term" value="F:ribosome binding"/>
    <property type="evidence" value="ECO:0007669"/>
    <property type="project" value="InterPro"/>
</dbReference>
<dbReference type="GO" id="GO:0003723">
    <property type="term" value="F:RNA binding"/>
    <property type="evidence" value="ECO:0007669"/>
    <property type="project" value="InterPro"/>
</dbReference>
<dbReference type="GO" id="GO:0003746">
    <property type="term" value="F:translation elongation factor activity"/>
    <property type="evidence" value="ECO:0007669"/>
    <property type="project" value="InterPro"/>
</dbReference>
<dbReference type="GO" id="GO:0003743">
    <property type="term" value="F:translation initiation factor activity"/>
    <property type="evidence" value="ECO:0007669"/>
    <property type="project" value="UniProtKB-UniRule"/>
</dbReference>
<dbReference type="GO" id="GO:0045901">
    <property type="term" value="P:positive regulation of translational elongation"/>
    <property type="evidence" value="ECO:0007669"/>
    <property type="project" value="InterPro"/>
</dbReference>
<dbReference type="GO" id="GO:0045905">
    <property type="term" value="P:positive regulation of translational termination"/>
    <property type="evidence" value="ECO:0007669"/>
    <property type="project" value="InterPro"/>
</dbReference>
<dbReference type="CDD" id="cd04467">
    <property type="entry name" value="S1_aIF5A"/>
    <property type="match status" value="1"/>
</dbReference>
<dbReference type="FunFam" id="2.30.30.30:FF:000038">
    <property type="entry name" value="Translation initiation factor 5A"/>
    <property type="match status" value="1"/>
</dbReference>
<dbReference type="FunFam" id="2.40.50.140:FF:000334">
    <property type="entry name" value="Translation initiation factor 5A"/>
    <property type="match status" value="1"/>
</dbReference>
<dbReference type="Gene3D" id="2.30.30.30">
    <property type="match status" value="1"/>
</dbReference>
<dbReference type="Gene3D" id="2.40.50.140">
    <property type="entry name" value="Nucleic acid-binding proteins"/>
    <property type="match status" value="1"/>
</dbReference>
<dbReference type="HAMAP" id="MF_00085">
    <property type="entry name" value="eIF_5A"/>
    <property type="match status" value="1"/>
</dbReference>
<dbReference type="InterPro" id="IPR001884">
    <property type="entry name" value="IF5A-like"/>
</dbReference>
<dbReference type="InterPro" id="IPR048670">
    <property type="entry name" value="IF5A-like_N"/>
</dbReference>
<dbReference type="InterPro" id="IPR012340">
    <property type="entry name" value="NA-bd_OB-fold"/>
</dbReference>
<dbReference type="InterPro" id="IPR014722">
    <property type="entry name" value="Rib_uL2_dom2"/>
</dbReference>
<dbReference type="InterPro" id="IPR019769">
    <property type="entry name" value="Trans_elong_IF5A_hypusine_site"/>
</dbReference>
<dbReference type="InterPro" id="IPR022847">
    <property type="entry name" value="Transl_elong_IF5A_arc"/>
</dbReference>
<dbReference type="InterPro" id="IPR020189">
    <property type="entry name" value="Transl_elong_IF5A_C"/>
</dbReference>
<dbReference type="InterPro" id="IPR008991">
    <property type="entry name" value="Translation_prot_SH3-like_sf"/>
</dbReference>
<dbReference type="NCBIfam" id="TIGR00037">
    <property type="entry name" value="eIF_5A"/>
    <property type="match status" value="1"/>
</dbReference>
<dbReference type="NCBIfam" id="NF003076">
    <property type="entry name" value="PRK03999.1"/>
    <property type="match status" value="1"/>
</dbReference>
<dbReference type="PANTHER" id="PTHR11673">
    <property type="entry name" value="TRANSLATION INITIATION FACTOR 5A FAMILY MEMBER"/>
    <property type="match status" value="1"/>
</dbReference>
<dbReference type="Pfam" id="PF01287">
    <property type="entry name" value="eIF-5a"/>
    <property type="match status" value="1"/>
</dbReference>
<dbReference type="Pfam" id="PF21485">
    <property type="entry name" value="IF5A-like_N"/>
    <property type="match status" value="1"/>
</dbReference>
<dbReference type="PIRSF" id="PIRSF003025">
    <property type="entry name" value="eIF5A"/>
    <property type="match status" value="1"/>
</dbReference>
<dbReference type="SMART" id="SM01376">
    <property type="entry name" value="eIF-5a"/>
    <property type="match status" value="1"/>
</dbReference>
<dbReference type="SUPFAM" id="SSF50249">
    <property type="entry name" value="Nucleic acid-binding proteins"/>
    <property type="match status" value="1"/>
</dbReference>
<dbReference type="SUPFAM" id="SSF50104">
    <property type="entry name" value="Translation proteins SH3-like domain"/>
    <property type="match status" value="1"/>
</dbReference>
<dbReference type="PROSITE" id="PS00302">
    <property type="entry name" value="IF5A_HYPUSINE"/>
    <property type="match status" value="1"/>
</dbReference>
<protein>
    <recommendedName>
        <fullName evidence="1">Translation initiation factor 5A</fullName>
    </recommendedName>
    <alternativeName>
        <fullName evidence="1">Hypusine-containing protein</fullName>
    </alternativeName>
    <alternativeName>
        <fullName evidence="1">eIF-5A</fullName>
    </alternativeName>
</protein>
<proteinExistence type="inferred from homology"/>
<feature type="chain" id="PRO_1000202607" description="Translation initiation factor 5A">
    <location>
        <begin position="1"/>
        <end position="131"/>
    </location>
</feature>
<feature type="modified residue" description="Hypusine" evidence="1">
    <location>
        <position position="36"/>
    </location>
</feature>
<gene>
    <name type="primary">eIF5A</name>
    <name type="ordered locus">YN1551_1610</name>
</gene>
<keyword id="KW-0963">Cytoplasm</keyword>
<keyword id="KW-0385">Hypusine</keyword>
<keyword id="KW-0396">Initiation factor</keyword>
<keyword id="KW-0648">Protein biosynthesis</keyword>
<evidence type="ECO:0000255" key="1">
    <source>
        <dbReference type="HAMAP-Rule" id="MF_00085"/>
    </source>
</evidence>
<comment type="function">
    <text evidence="1">Functions by promoting the formation of the first peptide bond.</text>
</comment>
<comment type="subcellular location">
    <subcellularLocation>
        <location evidence="1">Cytoplasm</location>
    </subcellularLocation>
</comment>
<comment type="similarity">
    <text evidence="1">Belongs to the eIF-5A family.</text>
</comment>
<organism>
    <name type="scientific">Saccharolobus islandicus (strain Y.N.15.51 / Yellowstone #2)</name>
    <name type="common">Sulfolobus islandicus</name>
    <dbReference type="NCBI Taxonomy" id="419942"/>
    <lineage>
        <taxon>Archaea</taxon>
        <taxon>Thermoproteota</taxon>
        <taxon>Thermoprotei</taxon>
        <taxon>Sulfolobales</taxon>
        <taxon>Sulfolobaceae</taxon>
        <taxon>Saccharolobus</taxon>
    </lineage>
</organism>